<name>FMT_SYNS9</name>
<protein>
    <recommendedName>
        <fullName evidence="1">Methionyl-tRNA formyltransferase</fullName>
        <ecNumber evidence="1">2.1.2.9</ecNumber>
    </recommendedName>
</protein>
<dbReference type="EC" id="2.1.2.9" evidence="1"/>
<dbReference type="EMBL" id="CP000097">
    <property type="protein sequence ID" value="ABB26132.1"/>
    <property type="molecule type" value="Genomic_DNA"/>
</dbReference>
<dbReference type="RefSeq" id="WP_011359959.1">
    <property type="nucleotide sequence ID" value="NC_007513.1"/>
</dbReference>
<dbReference type="SMR" id="Q3AXQ4"/>
<dbReference type="STRING" id="316279.Syncc9902_1168"/>
<dbReference type="KEGG" id="sye:Syncc9902_1168"/>
<dbReference type="eggNOG" id="COG0223">
    <property type="taxonomic scope" value="Bacteria"/>
</dbReference>
<dbReference type="HOGENOM" id="CLU_033347_1_1_3"/>
<dbReference type="OrthoDB" id="9802815at2"/>
<dbReference type="Proteomes" id="UP000002712">
    <property type="component" value="Chromosome"/>
</dbReference>
<dbReference type="GO" id="GO:0005829">
    <property type="term" value="C:cytosol"/>
    <property type="evidence" value="ECO:0007669"/>
    <property type="project" value="TreeGrafter"/>
</dbReference>
<dbReference type="GO" id="GO:0004479">
    <property type="term" value="F:methionyl-tRNA formyltransferase activity"/>
    <property type="evidence" value="ECO:0007669"/>
    <property type="project" value="UniProtKB-UniRule"/>
</dbReference>
<dbReference type="CDD" id="cd08646">
    <property type="entry name" value="FMT_core_Met-tRNA-FMT_N"/>
    <property type="match status" value="1"/>
</dbReference>
<dbReference type="CDD" id="cd08704">
    <property type="entry name" value="Met_tRNA_FMT_C"/>
    <property type="match status" value="1"/>
</dbReference>
<dbReference type="Gene3D" id="3.40.50.12230">
    <property type="match status" value="1"/>
</dbReference>
<dbReference type="HAMAP" id="MF_00182">
    <property type="entry name" value="Formyl_trans"/>
    <property type="match status" value="1"/>
</dbReference>
<dbReference type="InterPro" id="IPR005794">
    <property type="entry name" value="Fmt"/>
</dbReference>
<dbReference type="InterPro" id="IPR005793">
    <property type="entry name" value="Formyl_trans_C"/>
</dbReference>
<dbReference type="InterPro" id="IPR002376">
    <property type="entry name" value="Formyl_transf_N"/>
</dbReference>
<dbReference type="InterPro" id="IPR036477">
    <property type="entry name" value="Formyl_transf_N_sf"/>
</dbReference>
<dbReference type="InterPro" id="IPR011034">
    <property type="entry name" value="Formyl_transferase-like_C_sf"/>
</dbReference>
<dbReference type="InterPro" id="IPR044135">
    <property type="entry name" value="Met-tRNA-FMT_C"/>
</dbReference>
<dbReference type="InterPro" id="IPR041711">
    <property type="entry name" value="Met-tRNA-FMT_N"/>
</dbReference>
<dbReference type="NCBIfam" id="TIGR00460">
    <property type="entry name" value="fmt"/>
    <property type="match status" value="1"/>
</dbReference>
<dbReference type="PANTHER" id="PTHR11138">
    <property type="entry name" value="METHIONYL-TRNA FORMYLTRANSFERASE"/>
    <property type="match status" value="1"/>
</dbReference>
<dbReference type="PANTHER" id="PTHR11138:SF5">
    <property type="entry name" value="METHIONYL-TRNA FORMYLTRANSFERASE, MITOCHONDRIAL"/>
    <property type="match status" value="1"/>
</dbReference>
<dbReference type="Pfam" id="PF02911">
    <property type="entry name" value="Formyl_trans_C"/>
    <property type="match status" value="1"/>
</dbReference>
<dbReference type="Pfam" id="PF00551">
    <property type="entry name" value="Formyl_trans_N"/>
    <property type="match status" value="1"/>
</dbReference>
<dbReference type="SUPFAM" id="SSF50486">
    <property type="entry name" value="FMT C-terminal domain-like"/>
    <property type="match status" value="1"/>
</dbReference>
<dbReference type="SUPFAM" id="SSF53328">
    <property type="entry name" value="Formyltransferase"/>
    <property type="match status" value="1"/>
</dbReference>
<organism>
    <name type="scientific">Synechococcus sp. (strain CC9902)</name>
    <dbReference type="NCBI Taxonomy" id="316279"/>
    <lineage>
        <taxon>Bacteria</taxon>
        <taxon>Bacillati</taxon>
        <taxon>Cyanobacteriota</taxon>
        <taxon>Cyanophyceae</taxon>
        <taxon>Synechococcales</taxon>
        <taxon>Synechococcaceae</taxon>
        <taxon>Synechococcus</taxon>
    </lineage>
</organism>
<comment type="function">
    <text evidence="1">Attaches a formyl group to the free amino group of methionyl-tRNA(fMet). The formyl group appears to play a dual role in the initiator identity of N-formylmethionyl-tRNA by promoting its recognition by IF2 and preventing the misappropriation of this tRNA by the elongation apparatus.</text>
</comment>
<comment type="catalytic activity">
    <reaction evidence="1">
        <text>L-methionyl-tRNA(fMet) + (6R)-10-formyltetrahydrofolate = N-formyl-L-methionyl-tRNA(fMet) + (6S)-5,6,7,8-tetrahydrofolate + H(+)</text>
        <dbReference type="Rhea" id="RHEA:24380"/>
        <dbReference type="Rhea" id="RHEA-COMP:9952"/>
        <dbReference type="Rhea" id="RHEA-COMP:9953"/>
        <dbReference type="ChEBI" id="CHEBI:15378"/>
        <dbReference type="ChEBI" id="CHEBI:57453"/>
        <dbReference type="ChEBI" id="CHEBI:78530"/>
        <dbReference type="ChEBI" id="CHEBI:78844"/>
        <dbReference type="ChEBI" id="CHEBI:195366"/>
        <dbReference type="EC" id="2.1.2.9"/>
    </reaction>
</comment>
<comment type="similarity">
    <text evidence="1">Belongs to the Fmt family.</text>
</comment>
<reference key="1">
    <citation type="submission" date="2005-08" db="EMBL/GenBank/DDBJ databases">
        <title>Complete sequence of Synechococcus sp. CC9902.</title>
        <authorList>
            <person name="Copeland A."/>
            <person name="Lucas S."/>
            <person name="Lapidus A."/>
            <person name="Barry K."/>
            <person name="Detter J.C."/>
            <person name="Glavina T."/>
            <person name="Hammon N."/>
            <person name="Israni S."/>
            <person name="Pitluck S."/>
            <person name="Martinez M."/>
            <person name="Schmutz J."/>
            <person name="Larimer F."/>
            <person name="Land M."/>
            <person name="Kyrpides N."/>
            <person name="Ivanova N."/>
            <person name="Richardson P."/>
        </authorList>
    </citation>
    <scope>NUCLEOTIDE SEQUENCE [LARGE SCALE GENOMIC DNA]</scope>
    <source>
        <strain>CC9902</strain>
    </source>
</reference>
<sequence>MKILYWGTPEYAVPTLLALHAAGHEIVGVVTQPDRRRGRGKQLMPSAIKVCAQSLGLAVFTPERIKTDVGCQKELADLNADVSVVVAFGQILPKSVLEQPPLGCWNGHGSLLPRWRGAGPIQWALLEGDSETGVGIMAMEEGLDTGPVLLEQRLPISLDQNSHDLGEKLSQLTATLMVEAVDLILKAGVGTEPERLERLNVRYQGQEMSYARMLKKEDFQIKWGDPALRTHRRVMGLYPSAMTGWRNKRLKVLETEPLIERLSDEISEEARALLGRWRTGEDHPGTVLGCINNVGIVVSTSGCPILIREAQLEGKGRCRAQGLVQQLAASVGDRFQSF</sequence>
<evidence type="ECO:0000255" key="1">
    <source>
        <dbReference type="HAMAP-Rule" id="MF_00182"/>
    </source>
</evidence>
<proteinExistence type="inferred from homology"/>
<accession>Q3AXQ4</accession>
<gene>
    <name evidence="1" type="primary">fmt</name>
    <name type="ordered locus">Syncc9902_1168</name>
</gene>
<feature type="chain" id="PRO_1000020193" description="Methionyl-tRNA formyltransferase">
    <location>
        <begin position="1"/>
        <end position="338"/>
    </location>
</feature>
<feature type="binding site" evidence="1">
    <location>
        <begin position="110"/>
        <end position="113"/>
    </location>
    <ligand>
        <name>(6S)-5,6,7,8-tetrahydrofolate</name>
        <dbReference type="ChEBI" id="CHEBI:57453"/>
    </ligand>
</feature>
<keyword id="KW-0648">Protein biosynthesis</keyword>
<keyword id="KW-1185">Reference proteome</keyword>
<keyword id="KW-0808">Transferase</keyword>